<name>KRT36_MOUSE</name>
<sequence length="473" mass="52790">MATQICTPTFSAGSAKGLCGTSGSFSRISSIHSMGSCRAPSLVGTVGSVSSFRTGFSGPGSCLPGSYLSSGCHSSGFAGSGGWFCEGAFNGNEKATMQILNDRLANYLEKVRQLEQENTQLECRIREWYECQIPYICPDYQSYFKTAEELQQKILLTKSENARLILQIDNAKLAADDFRTKYETELSLRQLVEADINGLRRILDELTLCKADLEAQVESLKEELLCLKRNHEEEVNALRSQLGDRLNVEVDAAPPVDLNKILDDMRCQYETLVENNRRDVEAWFNTQTEELNQQVVSSSEQLQCCQTEIIELRRTVNSLEIELQAQQSMRNSLESTLAETEARYSSQLGQMQCLITNVESQLAEIRCDLERQNHEYQVLLDVKARLESEIATYRRLLDGEDCKLPAHPCSTECKPAVRVPYIPSTTCTPAGPCTPAGPCTPAPQVSTQIRTITEEIRDGRVISSREHVVPRAM</sequence>
<organism>
    <name type="scientific">Mus musculus</name>
    <name type="common">Mouse</name>
    <dbReference type="NCBI Taxonomy" id="10090"/>
    <lineage>
        <taxon>Eukaryota</taxon>
        <taxon>Metazoa</taxon>
        <taxon>Chordata</taxon>
        <taxon>Craniata</taxon>
        <taxon>Vertebrata</taxon>
        <taxon>Euteleostomi</taxon>
        <taxon>Mammalia</taxon>
        <taxon>Eutheria</taxon>
        <taxon>Euarchontoglires</taxon>
        <taxon>Glires</taxon>
        <taxon>Rodentia</taxon>
        <taxon>Myomorpha</taxon>
        <taxon>Muroidea</taxon>
        <taxon>Muridae</taxon>
        <taxon>Murinae</taxon>
        <taxon>Mus</taxon>
        <taxon>Mus</taxon>
    </lineage>
</organism>
<comment type="subunit">
    <text evidence="4">Heterotetramer of two type I and two type II keratins.</text>
</comment>
<comment type="tissue specificity">
    <text evidence="4">In skin, only expressed in the suprabasal cells of tail scale epidermis. Suprabasally expressed in stratified squamous epithelia and also in the posterior unit of the complex filiform papillae of tongue. Expressed in rare anatomical sites in which an orthokeratinized stratum corneum would be too soft and a hard keratinized structure would be too rigid to meet the functional requirement of the respective epithelia.</text>
</comment>
<comment type="induction">
    <text evidence="4">mRNA synthesis is suppressed during retinoic acid-mediated orthokeratotic conversion of tail scale epidermis.</text>
</comment>
<comment type="miscellaneous">
    <text evidence="6">There are two types of hair/microfibrillar keratin, I (acidic) and II (neutral to basic).</text>
</comment>
<comment type="similarity">
    <text evidence="3">Belongs to the intermediate filament family.</text>
</comment>
<comment type="sequence caution" evidence="6">
    <conflict type="frameshift">
        <sequence resource="EMBL-CDS" id="CAA46480"/>
    </conflict>
</comment>
<reference key="1">
    <citation type="journal article" date="2009" name="PLoS Biol.">
        <title>Lineage-specific biology revealed by a finished genome assembly of the mouse.</title>
        <authorList>
            <person name="Church D.M."/>
            <person name="Goodstadt L."/>
            <person name="Hillier L.W."/>
            <person name="Zody M.C."/>
            <person name="Goldstein S."/>
            <person name="She X."/>
            <person name="Bult C.J."/>
            <person name="Agarwala R."/>
            <person name="Cherry J.L."/>
            <person name="DiCuccio M."/>
            <person name="Hlavina W."/>
            <person name="Kapustin Y."/>
            <person name="Meric P."/>
            <person name="Maglott D."/>
            <person name="Birtle Z."/>
            <person name="Marques A.C."/>
            <person name="Graves T."/>
            <person name="Zhou S."/>
            <person name="Teague B."/>
            <person name="Potamousis K."/>
            <person name="Churas C."/>
            <person name="Place M."/>
            <person name="Herschleb J."/>
            <person name="Runnheim R."/>
            <person name="Forrest D."/>
            <person name="Amos-Landgraf J."/>
            <person name="Schwartz D.C."/>
            <person name="Cheng Z."/>
            <person name="Lindblad-Toh K."/>
            <person name="Eichler E.E."/>
            <person name="Ponting C.P."/>
        </authorList>
    </citation>
    <scope>NUCLEOTIDE SEQUENCE [LARGE SCALE GENOMIC DNA]</scope>
    <source>
        <strain>C57BL/6J</strain>
    </source>
</reference>
<reference evidence="6 7" key="2">
    <citation type="journal article" date="1992" name="Differentiation">
        <title>Structural features and sites of expression of a new murine 65 kD and 48 kD hair-related keratin pair, associated with a special type of parakeratotic epithelial differentiation.</title>
        <authorList>
            <person name="Tobiasch E."/>
            <person name="Winter H."/>
            <person name="Schweizer J."/>
        </authorList>
    </citation>
    <scope>NUCLEOTIDE SEQUENCE [MRNA] OF 283-473</scope>
    <scope>SUBUNIT</scope>
    <scope>TISSUE SPECIFICITY</scope>
    <scope>INDUCTION</scope>
    <source>
        <strain>NMRI</strain>
        <tissue evidence="4">Tail epidermis</tissue>
    </source>
</reference>
<proteinExistence type="evidence at protein level"/>
<dbReference type="EMBL" id="AL590873">
    <property type="protein sequence ID" value="CAM17771.1"/>
    <property type="molecule type" value="Genomic_DNA"/>
</dbReference>
<dbReference type="EMBL" id="AL662808">
    <property type="protein sequence ID" value="CAM17771.1"/>
    <property type="status" value="JOINED"/>
    <property type="molecule type" value="Genomic_DNA"/>
</dbReference>
<dbReference type="EMBL" id="AL662808">
    <property type="protein sequence ID" value="CAM15791.1"/>
    <property type="molecule type" value="Genomic_DNA"/>
</dbReference>
<dbReference type="EMBL" id="AL590873">
    <property type="protein sequence ID" value="CAM15791.1"/>
    <property type="status" value="JOINED"/>
    <property type="molecule type" value="Genomic_DNA"/>
</dbReference>
<dbReference type="EMBL" id="X65506">
    <property type="protein sequence ID" value="CAA46480.1"/>
    <property type="status" value="ALT_FRAME"/>
    <property type="molecule type" value="mRNA"/>
</dbReference>
<dbReference type="CCDS" id="CCDS48929.1"/>
<dbReference type="PIR" id="I48660">
    <property type="entry name" value="S21388"/>
</dbReference>
<dbReference type="RefSeq" id="NP_001167570.1">
    <property type="nucleotide sequence ID" value="NM_001174099.1"/>
</dbReference>
<dbReference type="RefSeq" id="XP_017169791.1">
    <property type="nucleotide sequence ID" value="XM_017314302.2"/>
</dbReference>
<dbReference type="SMR" id="B1AQ75"/>
<dbReference type="BioGRID" id="201028">
    <property type="interactions" value="5"/>
</dbReference>
<dbReference type="ComplexPortal" id="CPX-5870">
    <property type="entry name" value="Keratin-36 - Keratin-86 dimer complex"/>
</dbReference>
<dbReference type="FunCoup" id="B1AQ75">
    <property type="interactions" value="188"/>
</dbReference>
<dbReference type="STRING" id="10090.ENSMUSP00000103039"/>
<dbReference type="iPTMnet" id="B1AQ75"/>
<dbReference type="PhosphoSitePlus" id="B1AQ75"/>
<dbReference type="jPOST" id="B1AQ75"/>
<dbReference type="PaxDb" id="10090-ENSMUSP00000103039"/>
<dbReference type="PeptideAtlas" id="B1AQ75"/>
<dbReference type="ProteomicsDB" id="263677"/>
<dbReference type="Antibodypedia" id="16678">
    <property type="antibodies" value="136 antibodies from 26 providers"/>
</dbReference>
<dbReference type="DNASU" id="16673"/>
<dbReference type="Ensembl" id="ENSMUST00000107416.3">
    <property type="protein sequence ID" value="ENSMUSP00000103039.3"/>
    <property type="gene ID" value="ENSMUSG00000020916.9"/>
</dbReference>
<dbReference type="GeneID" id="16673"/>
<dbReference type="KEGG" id="mmu:16673"/>
<dbReference type="UCSC" id="uc011yey.1">
    <property type="organism name" value="mouse"/>
</dbReference>
<dbReference type="AGR" id="MGI:109364"/>
<dbReference type="CTD" id="8689"/>
<dbReference type="MGI" id="MGI:109364">
    <property type="gene designation" value="Krt36"/>
</dbReference>
<dbReference type="VEuPathDB" id="HostDB:ENSMUSG00000020916"/>
<dbReference type="eggNOG" id="ENOG502QQY9">
    <property type="taxonomic scope" value="Eukaryota"/>
</dbReference>
<dbReference type="GeneTree" id="ENSGT00940000161311"/>
<dbReference type="HOGENOM" id="CLU_012560_8_0_1"/>
<dbReference type="InParanoid" id="B1AQ75"/>
<dbReference type="OMA" id="AVRVPYI"/>
<dbReference type="OrthoDB" id="2441647at2759"/>
<dbReference type="PhylomeDB" id="B1AQ75"/>
<dbReference type="TreeFam" id="TF332742"/>
<dbReference type="Reactome" id="R-MMU-6805567">
    <property type="pathway name" value="Keratinization"/>
</dbReference>
<dbReference type="Reactome" id="R-MMU-6809371">
    <property type="pathway name" value="Formation of the cornified envelope"/>
</dbReference>
<dbReference type="BioGRID-ORCS" id="16673">
    <property type="hits" value="3 hits in 74 CRISPR screens"/>
</dbReference>
<dbReference type="PRO" id="PR:B1AQ75"/>
<dbReference type="Proteomes" id="UP000000589">
    <property type="component" value="Chromosome 11"/>
</dbReference>
<dbReference type="RNAct" id="B1AQ75">
    <property type="molecule type" value="protein"/>
</dbReference>
<dbReference type="Bgee" id="ENSMUSG00000020916">
    <property type="expression patterns" value="Expressed in tail skin and 28 other cell types or tissues"/>
</dbReference>
<dbReference type="GO" id="GO:0045111">
    <property type="term" value="C:intermediate filament cytoskeleton"/>
    <property type="evidence" value="ECO:0000314"/>
    <property type="project" value="UniProtKB"/>
</dbReference>
<dbReference type="GO" id="GO:0045095">
    <property type="term" value="C:keratin filament"/>
    <property type="evidence" value="ECO:0000266"/>
    <property type="project" value="ComplexPortal"/>
</dbReference>
<dbReference type="GO" id="GO:0030280">
    <property type="term" value="F:structural constituent of skin epidermis"/>
    <property type="evidence" value="ECO:0000314"/>
    <property type="project" value="UniProtKB"/>
</dbReference>
<dbReference type="GO" id="GO:0045616">
    <property type="term" value="P:regulation of keratinocyte differentiation"/>
    <property type="evidence" value="ECO:0000314"/>
    <property type="project" value="UniProtKB"/>
</dbReference>
<dbReference type="FunFam" id="1.20.5.1160:FF:000002">
    <property type="entry name" value="Type I keratin 10"/>
    <property type="match status" value="1"/>
</dbReference>
<dbReference type="FunFam" id="1.20.5.170:FF:000002">
    <property type="entry name" value="Type I keratin KA11"/>
    <property type="match status" value="1"/>
</dbReference>
<dbReference type="FunFam" id="1.20.5.500:FF:000001">
    <property type="entry name" value="Type II keratin 23"/>
    <property type="match status" value="1"/>
</dbReference>
<dbReference type="Gene3D" id="1.20.5.170">
    <property type="match status" value="1"/>
</dbReference>
<dbReference type="Gene3D" id="1.20.5.500">
    <property type="entry name" value="Single helix bin"/>
    <property type="match status" value="1"/>
</dbReference>
<dbReference type="Gene3D" id="1.20.5.1160">
    <property type="entry name" value="Vasodilator-stimulated phosphoprotein"/>
    <property type="match status" value="1"/>
</dbReference>
<dbReference type="InterPro" id="IPR018039">
    <property type="entry name" value="IF_conserved"/>
</dbReference>
<dbReference type="InterPro" id="IPR039008">
    <property type="entry name" value="IF_rod_dom"/>
</dbReference>
<dbReference type="InterPro" id="IPR002957">
    <property type="entry name" value="Keratin_I"/>
</dbReference>
<dbReference type="PANTHER" id="PTHR23239">
    <property type="entry name" value="INTERMEDIATE FILAMENT"/>
    <property type="match status" value="1"/>
</dbReference>
<dbReference type="PANTHER" id="PTHR23239:SF204">
    <property type="entry name" value="KERATIN, TYPE I CUTICULAR HA6"/>
    <property type="match status" value="1"/>
</dbReference>
<dbReference type="Pfam" id="PF00038">
    <property type="entry name" value="Filament"/>
    <property type="match status" value="1"/>
</dbReference>
<dbReference type="PRINTS" id="PR01248">
    <property type="entry name" value="TYPE1KERATIN"/>
</dbReference>
<dbReference type="SMART" id="SM01391">
    <property type="entry name" value="Filament"/>
    <property type="match status" value="1"/>
</dbReference>
<dbReference type="SUPFAM" id="SSF64593">
    <property type="entry name" value="Intermediate filament protein, coiled coil region"/>
    <property type="match status" value="2"/>
</dbReference>
<dbReference type="PROSITE" id="PS00226">
    <property type="entry name" value="IF_ROD_1"/>
    <property type="match status" value="1"/>
</dbReference>
<dbReference type="PROSITE" id="PS51842">
    <property type="entry name" value="IF_ROD_2"/>
    <property type="match status" value="1"/>
</dbReference>
<keyword id="KW-0175">Coiled coil</keyword>
<keyword id="KW-0403">Intermediate filament</keyword>
<keyword id="KW-0416">Keratin</keyword>
<keyword id="KW-1185">Reference proteome</keyword>
<accession>B1AQ75</accession>
<accession>Q61861</accession>
<protein>
    <recommendedName>
        <fullName evidence="1">Keratin, type I cuticular Ha6</fullName>
    </recommendedName>
    <alternativeName>
        <fullName evidence="8">Keratin-36</fullName>
        <shortName>K36</shortName>
    </alternativeName>
    <alternativeName>
        <fullName evidence="9">Keratin-5</fullName>
    </alternativeName>
    <alternativeName>
        <fullName evidence="7">MHRa-1</fullName>
    </alternativeName>
    <alternativeName>
        <fullName evidence="5">Type I keratin 48 kDa</fullName>
    </alternativeName>
</protein>
<gene>
    <name evidence="8" type="primary">Krt36</name>
    <name evidence="9" type="synonym">Hra-1</name>
    <name evidence="9" type="synonym">Krt1-22</name>
    <name evidence="9" type="synonym">Krt1-5</name>
</gene>
<evidence type="ECO:0000250" key="1">
    <source>
        <dbReference type="UniProtKB" id="O76013"/>
    </source>
</evidence>
<evidence type="ECO:0000255" key="2"/>
<evidence type="ECO:0000255" key="3">
    <source>
        <dbReference type="PROSITE-ProRule" id="PRU01188"/>
    </source>
</evidence>
<evidence type="ECO:0000269" key="4">
    <source>
    </source>
</evidence>
<evidence type="ECO:0000303" key="5">
    <source>
    </source>
</evidence>
<evidence type="ECO:0000305" key="6"/>
<evidence type="ECO:0000312" key="7">
    <source>
        <dbReference type="EMBL" id="CAA46480.1"/>
    </source>
</evidence>
<evidence type="ECO:0000312" key="8">
    <source>
        <dbReference type="EMBL" id="CAM17771.1"/>
    </source>
</evidence>
<evidence type="ECO:0000312" key="9">
    <source>
        <dbReference type="MGI" id="MGI:109364"/>
    </source>
</evidence>
<feature type="chain" id="PRO_0000363989" description="Keratin, type I cuticular Ha6">
    <location>
        <begin position="1"/>
        <end position="473"/>
    </location>
</feature>
<feature type="domain" description="IF rod" evidence="3">
    <location>
        <begin position="93"/>
        <end position="404"/>
    </location>
</feature>
<feature type="region of interest" description="Head" evidence="2">
    <location>
        <begin position="1"/>
        <end position="93"/>
    </location>
</feature>
<feature type="region of interest" description="Coil 1A" evidence="2">
    <location>
        <begin position="94"/>
        <end position="128"/>
    </location>
</feature>
<feature type="region of interest" description="Linker 1" evidence="2">
    <location>
        <begin position="129"/>
        <end position="139"/>
    </location>
</feature>
<feature type="region of interest" description="Coil 1B" evidence="2">
    <location>
        <begin position="140"/>
        <end position="240"/>
    </location>
</feature>
<feature type="region of interest" description="Linker 12" evidence="2">
    <location>
        <begin position="241"/>
        <end position="256"/>
    </location>
</feature>
<feature type="region of interest" description="Coil 2" evidence="2">
    <location>
        <begin position="257"/>
        <end position="400"/>
    </location>
</feature>
<feature type="region of interest" description="Tail" evidence="2">
    <location>
        <begin position="401"/>
        <end position="473"/>
    </location>
</feature>
<feature type="site" description="Stutter" evidence="2">
    <location>
        <position position="342"/>
    </location>
</feature>
<feature type="sequence conflict" description="In Ref. 2; CAA46480." evidence="6" ref="2">
    <original>NT</original>
    <variation>IA</variation>
    <location>
        <begin position="285"/>
        <end position="286"/>
    </location>
</feature>
<feature type="sequence conflict" description="In Ref. 2; CAA46480." evidence="6" ref="2">
    <original>VNS</original>
    <variation>SQL</variation>
    <location>
        <begin position="316"/>
        <end position="318"/>
    </location>
</feature>
<feature type="sequence conflict" description="In Ref. 2; CAA46480." evidence="6" ref="2">
    <original>Q</original>
    <variation>R</variation>
    <location>
        <position position="326"/>
    </location>
</feature>
<feature type="sequence conflict" description="In Ref. 2; CAA46480." evidence="6" ref="2">
    <original>N</original>
    <variation>H</variation>
    <location>
        <position position="331"/>
    </location>
</feature>
<feature type="sequence conflict" description="In Ref. 2; CAA46480." evidence="6" ref="2">
    <original>N</original>
    <variation>K</variation>
    <location>
        <position position="357"/>
    </location>
</feature>